<name>THID_STAAS</name>
<feature type="chain" id="PRO_0000192031" description="Hydroxymethylpyrimidine/phosphomethylpyrimidine kinase">
    <location>
        <begin position="1"/>
        <end position="276"/>
    </location>
</feature>
<feature type="binding site" evidence="1">
    <location>
        <position position="45"/>
    </location>
    <ligand>
        <name>4-amino-5-hydroxymethyl-2-methylpyrimidine</name>
        <dbReference type="ChEBI" id="CHEBI:16892"/>
    </ligand>
</feature>
<comment type="function">
    <text evidence="2">Catalyzes the phosphorylation of hydroxymethylpyrimidine phosphate (HMP-P) to HMP-PP, and of HMP to HMP-P.</text>
</comment>
<comment type="catalytic activity">
    <reaction evidence="2">
        <text>4-amino-5-hydroxymethyl-2-methylpyrimidine + ATP = 4-amino-2-methyl-5-(phosphooxymethyl)pyrimidine + ADP + H(+)</text>
        <dbReference type="Rhea" id="RHEA:23096"/>
        <dbReference type="ChEBI" id="CHEBI:15378"/>
        <dbReference type="ChEBI" id="CHEBI:16892"/>
        <dbReference type="ChEBI" id="CHEBI:30616"/>
        <dbReference type="ChEBI" id="CHEBI:58354"/>
        <dbReference type="ChEBI" id="CHEBI:456216"/>
        <dbReference type="EC" id="2.7.1.49"/>
    </reaction>
</comment>
<comment type="catalytic activity">
    <reaction evidence="2">
        <text>4-amino-2-methyl-5-(phosphooxymethyl)pyrimidine + ATP = 4-amino-2-methyl-5-(diphosphooxymethyl)pyrimidine + ADP</text>
        <dbReference type="Rhea" id="RHEA:19893"/>
        <dbReference type="ChEBI" id="CHEBI:30616"/>
        <dbReference type="ChEBI" id="CHEBI:57841"/>
        <dbReference type="ChEBI" id="CHEBI:58354"/>
        <dbReference type="ChEBI" id="CHEBI:456216"/>
        <dbReference type="EC" id="2.7.4.7"/>
    </reaction>
</comment>
<comment type="pathway">
    <text>Cofactor biosynthesis; thiamine diphosphate biosynthesis; 4-amino-2-methyl-5-diphosphomethylpyrimidine from 5-amino-1-(5-phospho-D-ribosyl)imidazole: step 2/3.</text>
</comment>
<comment type="pathway">
    <text>Cofactor biosynthesis; thiamine diphosphate biosynthesis; 4-amino-2-methyl-5-diphosphomethylpyrimidine from 5-amino-1-(5-phospho-D-ribosyl)imidazole: step 3/3.</text>
</comment>
<comment type="similarity">
    <text evidence="3">Belongs to the ThiD family.</text>
</comment>
<gene>
    <name type="primary">thiD</name>
    <name type="ordered locus">SAS1997</name>
</gene>
<evidence type="ECO:0000250" key="1"/>
<evidence type="ECO:0000250" key="2">
    <source>
        <dbReference type="UniProtKB" id="P76422"/>
    </source>
</evidence>
<evidence type="ECO:0000305" key="3"/>
<reference key="1">
    <citation type="journal article" date="2004" name="Proc. Natl. Acad. Sci. U.S.A.">
        <title>Complete genomes of two clinical Staphylococcus aureus strains: evidence for the rapid evolution of virulence and drug resistance.</title>
        <authorList>
            <person name="Holden M.T.G."/>
            <person name="Feil E.J."/>
            <person name="Lindsay J.A."/>
            <person name="Peacock S.J."/>
            <person name="Day N.P.J."/>
            <person name="Enright M.C."/>
            <person name="Foster T.J."/>
            <person name="Moore C.E."/>
            <person name="Hurst L."/>
            <person name="Atkin R."/>
            <person name="Barron A."/>
            <person name="Bason N."/>
            <person name="Bentley S.D."/>
            <person name="Chillingworth C."/>
            <person name="Chillingworth T."/>
            <person name="Churcher C."/>
            <person name="Clark L."/>
            <person name="Corton C."/>
            <person name="Cronin A."/>
            <person name="Doggett J."/>
            <person name="Dowd L."/>
            <person name="Feltwell T."/>
            <person name="Hance Z."/>
            <person name="Harris B."/>
            <person name="Hauser H."/>
            <person name="Holroyd S."/>
            <person name="Jagels K."/>
            <person name="James K.D."/>
            <person name="Lennard N."/>
            <person name="Line A."/>
            <person name="Mayes R."/>
            <person name="Moule S."/>
            <person name="Mungall K."/>
            <person name="Ormond D."/>
            <person name="Quail M.A."/>
            <person name="Rabbinowitsch E."/>
            <person name="Rutherford K.M."/>
            <person name="Sanders M."/>
            <person name="Sharp S."/>
            <person name="Simmonds M."/>
            <person name="Stevens K."/>
            <person name="Whitehead S."/>
            <person name="Barrell B.G."/>
            <person name="Spratt B.G."/>
            <person name="Parkhill J."/>
        </authorList>
    </citation>
    <scope>NUCLEOTIDE SEQUENCE [LARGE SCALE GENOMIC DNA]</scope>
    <source>
        <strain>MSSA476</strain>
    </source>
</reference>
<accession>Q6G7L7</accession>
<proteinExistence type="inferred from homology"/>
<keyword id="KW-0067">ATP-binding</keyword>
<keyword id="KW-0418">Kinase</keyword>
<keyword id="KW-0547">Nucleotide-binding</keyword>
<keyword id="KW-0784">Thiamine biosynthesis</keyword>
<keyword id="KW-0808">Transferase</keyword>
<dbReference type="EC" id="2.7.1.49" evidence="2"/>
<dbReference type="EC" id="2.7.4.7" evidence="2"/>
<dbReference type="EMBL" id="BX571857">
    <property type="protein sequence ID" value="CAG43804.1"/>
    <property type="molecule type" value="Genomic_DNA"/>
</dbReference>
<dbReference type="RefSeq" id="WP_000594960.1">
    <property type="nucleotide sequence ID" value="NC_002953.3"/>
</dbReference>
<dbReference type="SMR" id="Q6G7L7"/>
<dbReference type="KEGG" id="sas:SAS1997"/>
<dbReference type="HOGENOM" id="CLU_020520_0_0_9"/>
<dbReference type="UniPathway" id="UPA00060">
    <property type="reaction ID" value="UER00137"/>
</dbReference>
<dbReference type="UniPathway" id="UPA00060">
    <property type="reaction ID" value="UER00138"/>
</dbReference>
<dbReference type="GO" id="GO:0005829">
    <property type="term" value="C:cytosol"/>
    <property type="evidence" value="ECO:0007669"/>
    <property type="project" value="TreeGrafter"/>
</dbReference>
<dbReference type="GO" id="GO:0005524">
    <property type="term" value="F:ATP binding"/>
    <property type="evidence" value="ECO:0007669"/>
    <property type="project" value="UniProtKB-KW"/>
</dbReference>
<dbReference type="GO" id="GO:0008902">
    <property type="term" value="F:hydroxymethylpyrimidine kinase activity"/>
    <property type="evidence" value="ECO:0007669"/>
    <property type="project" value="UniProtKB-EC"/>
</dbReference>
<dbReference type="GO" id="GO:0008972">
    <property type="term" value="F:phosphomethylpyrimidine kinase activity"/>
    <property type="evidence" value="ECO:0007669"/>
    <property type="project" value="UniProtKB-EC"/>
</dbReference>
<dbReference type="GO" id="GO:0009228">
    <property type="term" value="P:thiamine biosynthetic process"/>
    <property type="evidence" value="ECO:0007669"/>
    <property type="project" value="UniProtKB-KW"/>
</dbReference>
<dbReference type="GO" id="GO:0009229">
    <property type="term" value="P:thiamine diphosphate biosynthetic process"/>
    <property type="evidence" value="ECO:0007669"/>
    <property type="project" value="UniProtKB-UniPathway"/>
</dbReference>
<dbReference type="CDD" id="cd01169">
    <property type="entry name" value="HMPP_kinase"/>
    <property type="match status" value="1"/>
</dbReference>
<dbReference type="FunFam" id="3.40.1190.20:FF:000003">
    <property type="entry name" value="Phosphomethylpyrimidine kinase ThiD"/>
    <property type="match status" value="1"/>
</dbReference>
<dbReference type="Gene3D" id="3.40.1190.20">
    <property type="match status" value="1"/>
</dbReference>
<dbReference type="InterPro" id="IPR004399">
    <property type="entry name" value="HMP/HMP-P_kinase_dom"/>
</dbReference>
<dbReference type="InterPro" id="IPR013749">
    <property type="entry name" value="PM/HMP-P_kinase-1"/>
</dbReference>
<dbReference type="InterPro" id="IPR029056">
    <property type="entry name" value="Ribokinase-like"/>
</dbReference>
<dbReference type="NCBIfam" id="TIGR00097">
    <property type="entry name" value="HMP-P_kinase"/>
    <property type="match status" value="1"/>
</dbReference>
<dbReference type="PANTHER" id="PTHR20858:SF17">
    <property type="entry name" value="HYDROXYMETHYLPYRIMIDINE_PHOSPHOMETHYLPYRIMIDINE KINASE THI20-RELATED"/>
    <property type="match status" value="1"/>
</dbReference>
<dbReference type="PANTHER" id="PTHR20858">
    <property type="entry name" value="PHOSPHOMETHYLPYRIMIDINE KINASE"/>
    <property type="match status" value="1"/>
</dbReference>
<dbReference type="Pfam" id="PF08543">
    <property type="entry name" value="Phos_pyr_kin"/>
    <property type="match status" value="1"/>
</dbReference>
<dbReference type="SUPFAM" id="SSF53613">
    <property type="entry name" value="Ribokinase-like"/>
    <property type="match status" value="1"/>
</dbReference>
<sequence length="276" mass="30288">MIKPKIALTIAGTDPTGGAGVMADLKSFHSCGVYGMGVVTSIVAQNTLGVQHIHNLNHQWVDEQLDSVFNDTLPHAIKTGMIATADTMETIRHYLMQHESIPYVIDPVMLAKSGDSLMDNDTKQNLQHTLLPLADVVTPNLPEAEEITGLTIDSEEKIMQAGRIFINEIGSKGVIIKGGHSNDTDIAKDYLFTNEGVQTFENERFKTKHTHGTGCTFSAVITAELAKGRRLFEAVHKAKKFISMSIQYTPEIGRGRGPVNHFAYLKKEGLDDELSK</sequence>
<organism>
    <name type="scientific">Staphylococcus aureus (strain MSSA476)</name>
    <dbReference type="NCBI Taxonomy" id="282459"/>
    <lineage>
        <taxon>Bacteria</taxon>
        <taxon>Bacillati</taxon>
        <taxon>Bacillota</taxon>
        <taxon>Bacilli</taxon>
        <taxon>Bacillales</taxon>
        <taxon>Staphylococcaceae</taxon>
        <taxon>Staphylococcus</taxon>
    </lineage>
</organism>
<protein>
    <recommendedName>
        <fullName>Hydroxymethylpyrimidine/phosphomethylpyrimidine kinase</fullName>
        <ecNumber evidence="2">2.7.1.49</ecNumber>
        <ecNumber evidence="2">2.7.4.7</ecNumber>
    </recommendedName>
    <alternativeName>
        <fullName>Hydroxymethylpyrimidine kinase</fullName>
        <shortName>HMP kinase</shortName>
    </alternativeName>
    <alternativeName>
        <fullName>Hydroxymethylpyrimidine phosphate kinase</fullName>
        <shortName>HMP-P kinase</shortName>
        <shortName>HMP-phosphate kinase</shortName>
        <shortName>HMPP kinase</shortName>
    </alternativeName>
</protein>